<comment type="function">
    <text evidence="1">Part of a complex that catalyzes the reversible cleavage of acetyl-CoA, allowing growth on acetate as sole source of carbon and energy.</text>
</comment>
<comment type="catalytic activity">
    <reaction evidence="1">
        <text>5,6,7,8-tetrahydrosarcinapterin + methyl-Co(III)-[corrinoid Fe-S protein] = 5-methyltetrahydrosarcinapterin + Co(I)-[corrinoid Fe-S protein] + H(+)</text>
        <dbReference type="Rhea" id="RHEA:45196"/>
        <dbReference type="Rhea" id="RHEA-COMP:11110"/>
        <dbReference type="Rhea" id="RHEA-COMP:11111"/>
        <dbReference type="ChEBI" id="CHEBI:15378"/>
        <dbReference type="ChEBI" id="CHEBI:59924"/>
        <dbReference type="ChEBI" id="CHEBI:64267"/>
        <dbReference type="ChEBI" id="CHEBI:85033"/>
        <dbReference type="ChEBI" id="CHEBI:85035"/>
        <dbReference type="EC" id="2.1.1.245"/>
    </reaction>
</comment>
<comment type="cofactor">
    <cofactor evidence="1">
        <name>corrinoid</name>
        <dbReference type="ChEBI" id="CHEBI:33913"/>
    </cofactor>
</comment>
<comment type="cofactor">
    <cofactor evidence="1">
        <name>[4Fe-4S] cluster</name>
        <dbReference type="ChEBI" id="CHEBI:49883"/>
    </cofactor>
    <text evidence="1">Binds 1 [4Fe-4S] cluster.</text>
</comment>
<comment type="pathway">
    <text evidence="1">One-carbon metabolism; methanogenesis from acetate.</text>
</comment>
<comment type="subunit">
    <text evidence="1">Heterodimer of delta and gamma chains. The ACDS complex is made up of alpha, epsilon, beta, gamma and delta chains with a probable stoichiometry of (alpha(2)epsilon(2))(4)-beta(8)-(gamma(1)delta(1))(8).</text>
</comment>
<evidence type="ECO:0000255" key="1">
    <source>
        <dbReference type="HAMAP-Rule" id="MF_01136"/>
    </source>
</evidence>
<evidence type="ECO:0000255" key="2">
    <source>
        <dbReference type="PROSITE-ProRule" id="PRU00989"/>
    </source>
</evidence>
<keyword id="KW-0004">4Fe-4S</keyword>
<keyword id="KW-0170">Cobalt</keyword>
<keyword id="KW-0408">Iron</keyword>
<keyword id="KW-0411">Iron-sulfur</keyword>
<keyword id="KW-0479">Metal-binding</keyword>
<keyword id="KW-0484">Methanogenesis</keyword>
<keyword id="KW-0489">Methyltransferase</keyword>
<keyword id="KW-1185">Reference proteome</keyword>
<keyword id="KW-0808">Transferase</keyword>
<organism>
    <name type="scientific">Methanosarcina acetivorans (strain ATCC 35395 / DSM 2834 / JCM 12185 / C2A)</name>
    <dbReference type="NCBI Taxonomy" id="188937"/>
    <lineage>
        <taxon>Archaea</taxon>
        <taxon>Methanobacteriati</taxon>
        <taxon>Methanobacteriota</taxon>
        <taxon>Stenosarchaea group</taxon>
        <taxon>Methanomicrobia</taxon>
        <taxon>Methanosarcinales</taxon>
        <taxon>Methanosarcinaceae</taxon>
        <taxon>Methanosarcina</taxon>
    </lineage>
</organism>
<sequence>MKINSPLEAYKYLPQTNCGECGEATCMAFASKLIDRSGKTSDCPPLIKEKKFAKKLAELDRLLAPEIRQVTIGVGEKAVNIGGDDVLYRHKLTFFNKTKMFFDVADNMDEAALVERVNSIANFRKFYVGRNLLLDGVAIRAVSNDPAKFAAAVKKVAEAGLPMIFCSFNPAVLKAGLEAAKDLKPLLYAANKDNWKEVGELAIEYKVPVVVSAFNDLDALKTLAKTYAEAGIKDIVLDPGTYPTGKGLKDTFTNFLKIRRAGIMGDTEIAYPIMALPFTAWMAGIADPVSASYWETVMASVFTIRYGDIMILHSLEPYATLPEVHLAETIYTDPRTPVSVDGGMYKVGSPTADSPVLFTTNFALTYYTVESDISSNGIDCWLLAVDTDGIGVEAAVAGGQLTADKVKDAFDKAGFDLKTAVNHNTVVTPGLAARLQGDLEDKLGANVKVGPMDSGRIPGWMEKNWPPK</sequence>
<dbReference type="EC" id="2.1.1.245" evidence="1"/>
<dbReference type="EMBL" id="AE010299">
    <property type="protein sequence ID" value="AAM04441.1"/>
    <property type="molecule type" value="Genomic_DNA"/>
</dbReference>
<dbReference type="EMBL" id="AE010299">
    <property type="protein sequence ID" value="AAM07216.1"/>
    <property type="molecule type" value="Genomic_DNA"/>
</dbReference>
<dbReference type="RefSeq" id="WP_011021046.1">
    <property type="nucleotide sequence ID" value="NC_003552.1"/>
</dbReference>
<dbReference type="SMR" id="Q8TH44"/>
<dbReference type="FunCoup" id="Q8TH44">
    <property type="interactions" value="72"/>
</dbReference>
<dbReference type="STRING" id="188937.MA_1011"/>
<dbReference type="EnsemblBacteria" id="AAM04441">
    <property type="protein sequence ID" value="AAM04441"/>
    <property type="gene ID" value="MA_1011"/>
</dbReference>
<dbReference type="EnsemblBacteria" id="AAM07216">
    <property type="protein sequence ID" value="AAM07216"/>
    <property type="gene ID" value="MA_3865"/>
</dbReference>
<dbReference type="GeneID" id="1475758"/>
<dbReference type="KEGG" id="mac:MA_1011"/>
<dbReference type="KEGG" id="mac:MA_3865"/>
<dbReference type="HOGENOM" id="CLU_050002_0_0_2"/>
<dbReference type="InParanoid" id="Q8TH44"/>
<dbReference type="OrthoDB" id="146240at2157"/>
<dbReference type="PhylomeDB" id="Q8TH44"/>
<dbReference type="UniPathway" id="UPA00642"/>
<dbReference type="Proteomes" id="UP000002487">
    <property type="component" value="Chromosome"/>
</dbReference>
<dbReference type="GO" id="GO:0051539">
    <property type="term" value="F:4 iron, 4 sulfur cluster binding"/>
    <property type="evidence" value="ECO:0007669"/>
    <property type="project" value="UniProtKB-KW"/>
</dbReference>
<dbReference type="GO" id="GO:0005506">
    <property type="term" value="F:iron ion binding"/>
    <property type="evidence" value="ECO:0007669"/>
    <property type="project" value="UniProtKB-UniRule"/>
</dbReference>
<dbReference type="GO" id="GO:0008168">
    <property type="term" value="F:methyltransferase activity"/>
    <property type="evidence" value="ECO:0007669"/>
    <property type="project" value="UniProtKB-UniRule"/>
</dbReference>
<dbReference type="GO" id="GO:0046356">
    <property type="term" value="P:acetyl-CoA catabolic process"/>
    <property type="evidence" value="ECO:0007669"/>
    <property type="project" value="InterPro"/>
</dbReference>
<dbReference type="GO" id="GO:0019385">
    <property type="term" value="P:methanogenesis, from acetate"/>
    <property type="evidence" value="ECO:0007669"/>
    <property type="project" value="UniProtKB-UniRule"/>
</dbReference>
<dbReference type="GO" id="GO:0032259">
    <property type="term" value="P:methylation"/>
    <property type="evidence" value="ECO:0007669"/>
    <property type="project" value="UniProtKB-KW"/>
</dbReference>
<dbReference type="FunFam" id="3.20.20.20:FF:000020">
    <property type="entry name" value="Acetyl-CoA decarbonylase/synthase complex subunit gamma"/>
    <property type="match status" value="1"/>
</dbReference>
<dbReference type="Gene3D" id="3.40.50.11600">
    <property type="match status" value="1"/>
</dbReference>
<dbReference type="Gene3D" id="3.20.20.20">
    <property type="entry name" value="Dihydropteroate synthase-like"/>
    <property type="match status" value="1"/>
</dbReference>
<dbReference type="HAMAP" id="MF_01136">
    <property type="entry name" value="CdhE"/>
    <property type="match status" value="1"/>
</dbReference>
<dbReference type="InterPro" id="IPR007202">
    <property type="entry name" value="4Fe-4S_dom"/>
</dbReference>
<dbReference type="InterPro" id="IPR016041">
    <property type="entry name" value="Ac-CoA_synth_d_su_TIM-brl"/>
</dbReference>
<dbReference type="InterPro" id="IPR051069">
    <property type="entry name" value="ACDS_complex_subunit"/>
</dbReference>
<dbReference type="InterPro" id="IPR016218">
    <property type="entry name" value="AcylCoA_decarb/synth_gsu"/>
</dbReference>
<dbReference type="InterPro" id="IPR023427">
    <property type="entry name" value="AcylCoA_decarb/synth_gsu_arc"/>
</dbReference>
<dbReference type="InterPro" id="IPR011005">
    <property type="entry name" value="Dihydropteroate_synth-like_sf"/>
</dbReference>
<dbReference type="NCBIfam" id="NF003195">
    <property type="entry name" value="PRK04165.1"/>
    <property type="match status" value="1"/>
</dbReference>
<dbReference type="PANTHER" id="PTHR36214">
    <property type="match status" value="1"/>
</dbReference>
<dbReference type="PANTHER" id="PTHR36214:SF3">
    <property type="entry name" value="ACETYL-COA DECARBONYLASE_SYNTHASE COMPLEX SUBUNIT GAMMA"/>
    <property type="match status" value="1"/>
</dbReference>
<dbReference type="Pfam" id="PF03599">
    <property type="entry name" value="CdhD"/>
    <property type="match status" value="1"/>
</dbReference>
<dbReference type="Pfam" id="PF04060">
    <property type="entry name" value="FeS"/>
    <property type="match status" value="1"/>
</dbReference>
<dbReference type="PIRSF" id="PIRSF000376">
    <property type="entry name" value="AcCoA_decarb_gamma"/>
    <property type="match status" value="1"/>
</dbReference>
<dbReference type="SUPFAM" id="SSF51717">
    <property type="entry name" value="Dihydropteroate synthetase-like"/>
    <property type="match status" value="1"/>
</dbReference>
<dbReference type="PROSITE" id="PS51656">
    <property type="entry name" value="4FE4S"/>
    <property type="match status" value="1"/>
</dbReference>
<reference key="1">
    <citation type="journal article" date="2002" name="Genome Res.">
        <title>The genome of Methanosarcina acetivorans reveals extensive metabolic and physiological diversity.</title>
        <authorList>
            <person name="Galagan J.E."/>
            <person name="Nusbaum C."/>
            <person name="Roy A."/>
            <person name="Endrizzi M.G."/>
            <person name="Macdonald P."/>
            <person name="FitzHugh W."/>
            <person name="Calvo S."/>
            <person name="Engels R."/>
            <person name="Smirnov S."/>
            <person name="Atnoor D."/>
            <person name="Brown A."/>
            <person name="Allen N."/>
            <person name="Naylor J."/>
            <person name="Stange-Thomann N."/>
            <person name="DeArellano K."/>
            <person name="Johnson R."/>
            <person name="Linton L."/>
            <person name="McEwan P."/>
            <person name="McKernan K."/>
            <person name="Talamas J."/>
            <person name="Tirrell A."/>
            <person name="Ye W."/>
            <person name="Zimmer A."/>
            <person name="Barber R.D."/>
            <person name="Cann I."/>
            <person name="Graham D.E."/>
            <person name="Grahame D.A."/>
            <person name="Guss A.M."/>
            <person name="Hedderich R."/>
            <person name="Ingram-Smith C."/>
            <person name="Kuettner H.C."/>
            <person name="Krzycki J.A."/>
            <person name="Leigh J.A."/>
            <person name="Li W."/>
            <person name="Liu J."/>
            <person name="Mukhopadhyay B."/>
            <person name="Reeve J.N."/>
            <person name="Smith K."/>
            <person name="Springer T.A."/>
            <person name="Umayam L.A."/>
            <person name="White O."/>
            <person name="White R.H."/>
            <person name="de Macario E.C."/>
            <person name="Ferry J.G."/>
            <person name="Jarrell K.F."/>
            <person name="Jing H."/>
            <person name="Macario A.J.L."/>
            <person name="Paulsen I.T."/>
            <person name="Pritchett M."/>
            <person name="Sowers K.R."/>
            <person name="Swanson R.V."/>
            <person name="Zinder S.H."/>
            <person name="Lander E."/>
            <person name="Metcalf W.W."/>
            <person name="Birren B."/>
        </authorList>
    </citation>
    <scope>NUCLEOTIDE SEQUENCE [LARGE SCALE GENOMIC DNA]</scope>
    <source>
        <strain>ATCC 35395 / DSM 2834 / JCM 12185 / C2A</strain>
    </source>
</reference>
<gene>
    <name evidence="1" type="primary">cdhE1</name>
    <name type="ordered locus">MA_1011</name>
</gene>
<gene>
    <name evidence="1" type="primary">cdhE2</name>
    <name type="ordered locus">MA_3865</name>
</gene>
<protein>
    <recommendedName>
        <fullName evidence="1">Acetyl-CoA decarbonylase/synthase complex subunit gamma</fullName>
        <shortName evidence="1">ACDS complex subunit gamma</shortName>
        <ecNumber evidence="1">2.1.1.245</ecNumber>
    </recommendedName>
    <alternativeName>
        <fullName evidence="1">5-methyltetrahydrosarcinapterin:corrinoid/iron-sulfur protein Co-methyltransferase</fullName>
    </alternativeName>
    <alternativeName>
        <fullName evidence="1">ACDS complex methyltransferase</fullName>
    </alternativeName>
    <alternativeName>
        <fullName evidence="1">Corrinoid/iron-sulfur component large subunit</fullName>
    </alternativeName>
</protein>
<proteinExistence type="inferred from homology"/>
<name>ACDG_METAC</name>
<accession>Q8TH44</accession>
<feature type="chain" id="PRO_0000155119" description="Acetyl-CoA decarbonylase/synthase complex subunit gamma">
    <location>
        <begin position="1"/>
        <end position="468"/>
    </location>
</feature>
<feature type="domain" description="4Fe-4S" evidence="2">
    <location>
        <begin position="1"/>
        <end position="60"/>
    </location>
</feature>
<feature type="binding site" evidence="1">
    <location>
        <position position="18"/>
    </location>
    <ligand>
        <name>[4Fe-4S] cluster</name>
        <dbReference type="ChEBI" id="CHEBI:49883"/>
    </ligand>
</feature>
<feature type="binding site" evidence="1">
    <location>
        <position position="21"/>
    </location>
    <ligand>
        <name>[4Fe-4S] cluster</name>
        <dbReference type="ChEBI" id="CHEBI:49883"/>
    </ligand>
</feature>
<feature type="binding site" evidence="1">
    <location>
        <position position="26"/>
    </location>
    <ligand>
        <name>[4Fe-4S] cluster</name>
        <dbReference type="ChEBI" id="CHEBI:49883"/>
    </ligand>
</feature>
<feature type="binding site" evidence="1">
    <location>
        <position position="43"/>
    </location>
    <ligand>
        <name>[4Fe-4S] cluster</name>
        <dbReference type="ChEBI" id="CHEBI:49883"/>
    </ligand>
</feature>